<feature type="chain" id="PRO_0000359396" description="5'-methylthioadenosine/S-adenosylhomocysteine nucleosidase">
    <location>
        <begin position="1"/>
        <end position="233"/>
    </location>
</feature>
<feature type="active site" description="Proton acceptor" evidence="1">
    <location>
        <position position="12"/>
    </location>
</feature>
<feature type="active site" description="Proton donor" evidence="1">
    <location>
        <position position="197"/>
    </location>
</feature>
<feature type="binding site" evidence="1">
    <location>
        <position position="78"/>
    </location>
    <ligand>
        <name>substrate</name>
    </ligand>
</feature>
<feature type="binding site" evidence="1">
    <location>
        <position position="152"/>
    </location>
    <ligand>
        <name>substrate</name>
    </ligand>
</feature>
<feature type="binding site" evidence="1">
    <location>
        <begin position="173"/>
        <end position="174"/>
    </location>
    <ligand>
        <name>substrate</name>
    </ligand>
</feature>
<gene>
    <name evidence="1" type="primary">mtnN</name>
    <name type="synonym">yadA</name>
    <name type="ordered locus">YPTB0747</name>
</gene>
<name>MTNN_YERPS</name>
<protein>
    <recommendedName>
        <fullName evidence="1">5'-methylthioadenosine/S-adenosylhomocysteine nucleosidase</fullName>
        <shortName evidence="1">MTA/SAH nucleosidase</shortName>
        <shortName evidence="1">MTAN</shortName>
        <ecNumber evidence="1">3.2.2.9</ecNumber>
    </recommendedName>
    <alternativeName>
        <fullName evidence="1">5'-deoxyadenosine nucleosidase</fullName>
        <shortName evidence="1">DOA nucleosidase</shortName>
        <shortName evidence="1">dAdo nucleosidase</shortName>
    </alternativeName>
    <alternativeName>
        <fullName evidence="1">5'-methylthioadenosine nucleosidase</fullName>
        <shortName evidence="1">MTA nucleosidase</shortName>
    </alternativeName>
    <alternativeName>
        <fullName evidence="1">S-adenosylhomocysteine nucleosidase</fullName>
        <shortName evidence="1">AdoHcy nucleosidase</shortName>
        <shortName evidence="1">SAH nucleosidase</shortName>
        <shortName evidence="1">SRH nucleosidase</shortName>
    </alternativeName>
</protein>
<reference key="1">
    <citation type="journal article" date="2004" name="Proc. Natl. Acad. Sci. U.S.A.">
        <title>Insights into the evolution of Yersinia pestis through whole-genome comparison with Yersinia pseudotuberculosis.</title>
        <authorList>
            <person name="Chain P.S.G."/>
            <person name="Carniel E."/>
            <person name="Larimer F.W."/>
            <person name="Lamerdin J."/>
            <person name="Stoutland P.O."/>
            <person name="Regala W.M."/>
            <person name="Georgescu A.M."/>
            <person name="Vergez L.M."/>
            <person name="Land M.L."/>
            <person name="Motin V.L."/>
            <person name="Brubaker R.R."/>
            <person name="Fowler J."/>
            <person name="Hinnebusch J."/>
            <person name="Marceau M."/>
            <person name="Medigue C."/>
            <person name="Simonet M."/>
            <person name="Chenal-Francisque V."/>
            <person name="Souza B."/>
            <person name="Dacheux D."/>
            <person name="Elliott J.M."/>
            <person name="Derbise A."/>
            <person name="Hauser L.J."/>
            <person name="Garcia E."/>
        </authorList>
    </citation>
    <scope>NUCLEOTIDE SEQUENCE [LARGE SCALE GENOMIC DNA]</scope>
    <source>
        <strain>IP32953</strain>
    </source>
</reference>
<accession>Q66EE6</accession>
<organism>
    <name type="scientific">Yersinia pseudotuberculosis serotype I (strain IP32953)</name>
    <dbReference type="NCBI Taxonomy" id="273123"/>
    <lineage>
        <taxon>Bacteria</taxon>
        <taxon>Pseudomonadati</taxon>
        <taxon>Pseudomonadota</taxon>
        <taxon>Gammaproteobacteria</taxon>
        <taxon>Enterobacterales</taxon>
        <taxon>Yersiniaceae</taxon>
        <taxon>Yersinia</taxon>
    </lineage>
</organism>
<comment type="function">
    <text evidence="1">Catalyzes the irreversible cleavage of the glycosidic bond in both 5'-methylthioadenosine (MTA) and S-adenosylhomocysteine (SAH/AdoHcy) to adenine and the corresponding thioribose, 5'-methylthioribose and S-ribosylhomocysteine, respectively. Also cleaves 5'-deoxyadenosine, a toxic by-product of radical S-adenosylmethionine (SAM) enzymes, into 5-deoxyribose and adenine. Thus, is required for in vivo function of the radical SAM enzymes biotin synthase and lipoic acid synthase, that are inhibited by 5'-deoxyadenosine accumulation.</text>
</comment>
<comment type="catalytic activity">
    <reaction evidence="1">
        <text>S-adenosyl-L-homocysteine + H2O = S-(5-deoxy-D-ribos-5-yl)-L-homocysteine + adenine</text>
        <dbReference type="Rhea" id="RHEA:17805"/>
        <dbReference type="ChEBI" id="CHEBI:15377"/>
        <dbReference type="ChEBI" id="CHEBI:16708"/>
        <dbReference type="ChEBI" id="CHEBI:57856"/>
        <dbReference type="ChEBI" id="CHEBI:58195"/>
        <dbReference type="EC" id="3.2.2.9"/>
    </reaction>
</comment>
<comment type="catalytic activity">
    <reaction evidence="1">
        <text>S-methyl-5'-thioadenosine + H2O = 5-(methylsulfanyl)-D-ribose + adenine</text>
        <dbReference type="Rhea" id="RHEA:13617"/>
        <dbReference type="ChEBI" id="CHEBI:15377"/>
        <dbReference type="ChEBI" id="CHEBI:16708"/>
        <dbReference type="ChEBI" id="CHEBI:17509"/>
        <dbReference type="ChEBI" id="CHEBI:78440"/>
        <dbReference type="EC" id="3.2.2.9"/>
    </reaction>
</comment>
<comment type="catalytic activity">
    <reaction evidence="1">
        <text>5'-deoxyadenosine + H2O = 5-deoxy-D-ribose + adenine</text>
        <dbReference type="Rhea" id="RHEA:29859"/>
        <dbReference type="ChEBI" id="CHEBI:15377"/>
        <dbReference type="ChEBI" id="CHEBI:16708"/>
        <dbReference type="ChEBI" id="CHEBI:17319"/>
        <dbReference type="ChEBI" id="CHEBI:149540"/>
        <dbReference type="EC" id="3.2.2.9"/>
    </reaction>
    <physiologicalReaction direction="left-to-right" evidence="1">
        <dbReference type="Rhea" id="RHEA:29860"/>
    </physiologicalReaction>
</comment>
<comment type="pathway">
    <text evidence="1">Amino-acid biosynthesis; L-methionine biosynthesis via salvage pathway; S-methyl-5-thio-alpha-D-ribose 1-phosphate from S-methyl-5'-thioadenosine (hydrolase route): step 1/2.</text>
</comment>
<comment type="subunit">
    <text evidence="1">Homodimer.</text>
</comment>
<comment type="similarity">
    <text evidence="1">Belongs to the PNP/UDP phosphorylase family. MtnN subfamily.</text>
</comment>
<evidence type="ECO:0000255" key="1">
    <source>
        <dbReference type="HAMAP-Rule" id="MF_01684"/>
    </source>
</evidence>
<proteinExistence type="inferred from homology"/>
<sequence length="233" mass="24566">MKVGIIGAMEEEVTLLRDRIENRQTLARAGCEIYTGQLNGIDVALLKSGIGKVAAAMGTTLLLEHCQPDLVINTGSAGGLASSLKVGDIVVSNEVRYHDADVTAFGYEPGQMAGCPAAFVADEDLIALAENCIQQLKLNAVRGLICSGDAFINGAEPLARIRAAFPTVAAVEMEAAAIGHVCYLFNTPFVVVRAISDVADQASHLSFEEFLVVAAKQSTLMIEAMLTTLAQRG</sequence>
<keyword id="KW-0028">Amino-acid biosynthesis</keyword>
<keyword id="KW-0378">Hydrolase</keyword>
<keyword id="KW-0486">Methionine biosynthesis</keyword>
<dbReference type="EC" id="3.2.2.9" evidence="1"/>
<dbReference type="EMBL" id="BX936398">
    <property type="protein sequence ID" value="CAH19987.1"/>
    <property type="molecule type" value="Genomic_DNA"/>
</dbReference>
<dbReference type="RefSeq" id="WP_011191764.1">
    <property type="nucleotide sequence ID" value="NC_006155.1"/>
</dbReference>
<dbReference type="SMR" id="Q66EE6"/>
<dbReference type="GeneID" id="49787248"/>
<dbReference type="KEGG" id="ypo:BZ17_1808"/>
<dbReference type="KEGG" id="yps:YPTB0747"/>
<dbReference type="PATRIC" id="fig|273123.14.peg.1916"/>
<dbReference type="UniPathway" id="UPA00904">
    <property type="reaction ID" value="UER00871"/>
</dbReference>
<dbReference type="Proteomes" id="UP000001011">
    <property type="component" value="Chromosome"/>
</dbReference>
<dbReference type="GO" id="GO:0005829">
    <property type="term" value="C:cytosol"/>
    <property type="evidence" value="ECO:0007669"/>
    <property type="project" value="TreeGrafter"/>
</dbReference>
<dbReference type="GO" id="GO:0008782">
    <property type="term" value="F:adenosylhomocysteine nucleosidase activity"/>
    <property type="evidence" value="ECO:0007669"/>
    <property type="project" value="UniProtKB-UniRule"/>
</dbReference>
<dbReference type="GO" id="GO:0008930">
    <property type="term" value="F:methylthioadenosine nucleosidase activity"/>
    <property type="evidence" value="ECO:0007669"/>
    <property type="project" value="UniProtKB-UniRule"/>
</dbReference>
<dbReference type="GO" id="GO:0019509">
    <property type="term" value="P:L-methionine salvage from methylthioadenosine"/>
    <property type="evidence" value="ECO:0007669"/>
    <property type="project" value="UniProtKB-UniRule"/>
</dbReference>
<dbReference type="GO" id="GO:0019284">
    <property type="term" value="P:L-methionine salvage from S-adenosylmethionine"/>
    <property type="evidence" value="ECO:0007669"/>
    <property type="project" value="TreeGrafter"/>
</dbReference>
<dbReference type="GO" id="GO:0046124">
    <property type="term" value="P:purine deoxyribonucleoside catabolic process"/>
    <property type="evidence" value="ECO:0007669"/>
    <property type="project" value="UniProtKB-UniRule"/>
</dbReference>
<dbReference type="CDD" id="cd09008">
    <property type="entry name" value="MTAN"/>
    <property type="match status" value="1"/>
</dbReference>
<dbReference type="FunFam" id="3.40.50.1580:FF:000001">
    <property type="entry name" value="MTA/SAH nucleosidase family protein"/>
    <property type="match status" value="1"/>
</dbReference>
<dbReference type="Gene3D" id="3.40.50.1580">
    <property type="entry name" value="Nucleoside phosphorylase domain"/>
    <property type="match status" value="1"/>
</dbReference>
<dbReference type="HAMAP" id="MF_01684">
    <property type="entry name" value="Salvage_MtnN"/>
    <property type="match status" value="1"/>
</dbReference>
<dbReference type="InterPro" id="IPR010049">
    <property type="entry name" value="MTA_SAH_Nsdase"/>
</dbReference>
<dbReference type="InterPro" id="IPR000845">
    <property type="entry name" value="Nucleoside_phosphorylase_d"/>
</dbReference>
<dbReference type="InterPro" id="IPR035994">
    <property type="entry name" value="Nucleoside_phosphorylase_sf"/>
</dbReference>
<dbReference type="NCBIfam" id="TIGR01704">
    <property type="entry name" value="MTA_SAH-Nsdase"/>
    <property type="match status" value="1"/>
</dbReference>
<dbReference type="NCBIfam" id="NF004079">
    <property type="entry name" value="PRK05584.1"/>
    <property type="match status" value="1"/>
</dbReference>
<dbReference type="PANTHER" id="PTHR46832">
    <property type="entry name" value="5'-METHYLTHIOADENOSINE/S-ADENOSYLHOMOCYSTEINE NUCLEOSIDASE"/>
    <property type="match status" value="1"/>
</dbReference>
<dbReference type="PANTHER" id="PTHR46832:SF1">
    <property type="entry name" value="5'-METHYLTHIOADENOSINE_S-ADENOSYLHOMOCYSTEINE NUCLEOSIDASE"/>
    <property type="match status" value="1"/>
</dbReference>
<dbReference type="Pfam" id="PF01048">
    <property type="entry name" value="PNP_UDP_1"/>
    <property type="match status" value="1"/>
</dbReference>
<dbReference type="SUPFAM" id="SSF53167">
    <property type="entry name" value="Purine and uridine phosphorylases"/>
    <property type="match status" value="1"/>
</dbReference>